<feature type="chain" id="PRO_0000320643" description="Uncharacterized protein C11orf96 homolog">
    <location>
        <begin position="1"/>
        <end position="242"/>
    </location>
</feature>
<feature type="region of interest" description="Disordered" evidence="4">
    <location>
        <begin position="16"/>
        <end position="121"/>
    </location>
</feature>
<feature type="region of interest" description="Disordered" evidence="4">
    <location>
        <begin position="152"/>
        <end position="178"/>
    </location>
</feature>
<feature type="region of interest" description="Disordered" evidence="4">
    <location>
        <begin position="215"/>
        <end position="242"/>
    </location>
</feature>
<feature type="compositionally biased region" description="Pro residues" evidence="4">
    <location>
        <begin position="50"/>
        <end position="64"/>
    </location>
</feature>
<feature type="compositionally biased region" description="Pro residues" evidence="4">
    <location>
        <begin position="97"/>
        <end position="113"/>
    </location>
</feature>
<feature type="compositionally biased region" description="Basic residues" evidence="4">
    <location>
        <begin position="157"/>
        <end position="172"/>
    </location>
</feature>
<feature type="compositionally biased region" description="Low complexity" evidence="4">
    <location>
        <begin position="232"/>
        <end position="242"/>
    </location>
</feature>
<feature type="modified residue" description="Phosphothreonine" evidence="3">
    <location>
        <position position="175"/>
    </location>
</feature>
<feature type="modified residue" description="Phosphoserine" evidence="6">
    <location>
        <position position="192"/>
    </location>
</feature>
<feature type="modified residue" description="Phosphoserine" evidence="6">
    <location>
        <position position="206"/>
    </location>
</feature>
<feature type="modified residue" description="Phosphoserine" evidence="2">
    <location>
        <position position="216"/>
    </location>
</feature>
<feature type="modified residue" description="Phosphoserine" evidence="6">
    <location>
        <position position="232"/>
    </location>
</feature>
<feature type="modified residue" description="Phosphoserine" evidence="6">
    <location>
        <position position="238"/>
    </location>
</feature>
<name>CK096_RAT</name>
<organism>
    <name type="scientific">Rattus norvegicus</name>
    <name type="common">Rat</name>
    <dbReference type="NCBI Taxonomy" id="10116"/>
    <lineage>
        <taxon>Eukaryota</taxon>
        <taxon>Metazoa</taxon>
        <taxon>Chordata</taxon>
        <taxon>Craniata</taxon>
        <taxon>Vertebrata</taxon>
        <taxon>Euteleostomi</taxon>
        <taxon>Mammalia</taxon>
        <taxon>Eutheria</taxon>
        <taxon>Euarchontoglires</taxon>
        <taxon>Glires</taxon>
        <taxon>Rodentia</taxon>
        <taxon>Myomorpha</taxon>
        <taxon>Muroidea</taxon>
        <taxon>Muridae</taxon>
        <taxon>Murinae</taxon>
        <taxon>Rattus</taxon>
    </lineage>
</organism>
<keyword id="KW-0963">Cytoplasm</keyword>
<keyword id="KW-0597">Phosphoprotein</keyword>
<keyword id="KW-1185">Reference proteome</keyword>
<evidence type="ECO:0000250" key="1">
    <source>
        <dbReference type="UniProtKB" id="C0HME0"/>
    </source>
</evidence>
<evidence type="ECO:0000250" key="2">
    <source>
        <dbReference type="UniProtKB" id="Q3UPL5"/>
    </source>
</evidence>
<evidence type="ECO:0000250" key="3">
    <source>
        <dbReference type="UniProtKB" id="Q7Z7L8"/>
    </source>
</evidence>
<evidence type="ECO:0000256" key="4">
    <source>
        <dbReference type="SAM" id="MobiDB-lite"/>
    </source>
</evidence>
<evidence type="ECO:0000269" key="5">
    <source>
    </source>
</evidence>
<evidence type="ECO:0007744" key="6">
    <source>
    </source>
</evidence>
<protein>
    <recommendedName>
        <fullName>Uncharacterized protein C11orf96 homolog</fullName>
    </recommendedName>
    <alternativeName>
        <fullName>Protein Ag2</fullName>
    </alternativeName>
</protein>
<gene>
    <name type="primary">Ag2</name>
</gene>
<reference key="1">
    <citation type="submission" date="1997-12" db="EMBL/GenBank/DDBJ databases">
        <title>Ag2, a gene upregulated during hippocampal long-term potentiation.</title>
        <authorList>
            <person name="Inokuchi K."/>
        </authorList>
    </citation>
    <scope>NUCLEOTIDE SEQUENCE [MRNA]</scope>
    <source>
        <strain>Wistar</strain>
        <tissue>Hippocampus</tissue>
    </source>
</reference>
<reference key="2">
    <citation type="journal article" date="2000" name="J. Neurochem.">
        <title>Identification and cataloging of genes induced by long-lasting long-term potentiation in awake rats.</title>
        <authorList>
            <person name="Matsuo R."/>
            <person name="Murayama A."/>
            <person name="Saitoh Y."/>
            <person name="Sakaki Y."/>
            <person name="Inokuchi K."/>
        </authorList>
    </citation>
    <scope>INDUCTION</scope>
</reference>
<reference key="3">
    <citation type="journal article" date="2012" name="Nat. Commun.">
        <title>Quantitative maps of protein phosphorylation sites across 14 different rat organs and tissues.</title>
        <authorList>
            <person name="Lundby A."/>
            <person name="Secher A."/>
            <person name="Lage K."/>
            <person name="Nordsborg N.B."/>
            <person name="Dmytriyev A."/>
            <person name="Lundby C."/>
            <person name="Olsen J.V."/>
        </authorList>
    </citation>
    <scope>PHOSPHORYLATION [LARGE SCALE ANALYSIS] AT SER-192; SER-206; SER-232 AND SER-238</scope>
    <scope>IDENTIFICATION BY MASS SPECTROMETRY [LARGE SCALE ANALYSIS]</scope>
</reference>
<accession>A8IHN8</accession>
<comment type="subcellular location">
    <subcellularLocation>
        <location evidence="1">Cytoplasm</location>
    </subcellularLocation>
</comment>
<comment type="induction">
    <text evidence="5">Expression in the hippocampus is induced by long-lasting long-term potentiation.</text>
</comment>
<proteinExistence type="evidence at protein level"/>
<dbReference type="EMBL" id="AB010079">
    <property type="protein sequence ID" value="BAF81982.1"/>
    <property type="molecule type" value="mRNA"/>
</dbReference>
<dbReference type="RefSeq" id="NP_001103525.1">
    <property type="nucleotide sequence ID" value="NM_001110055.1"/>
</dbReference>
<dbReference type="SMR" id="A8IHN8"/>
<dbReference type="STRING" id="10116.ENSRNOP00000072215"/>
<dbReference type="iPTMnet" id="A8IHN8"/>
<dbReference type="PhosphoSitePlus" id="A8IHN8"/>
<dbReference type="PeptideAtlas" id="A8IHN8"/>
<dbReference type="Ensembl" id="ENSRNOT00000088555.2">
    <property type="protein sequence ID" value="ENSRNOP00000072215.1"/>
    <property type="gene ID" value="ENSRNOG00000055564.2"/>
</dbReference>
<dbReference type="GeneID" id="499839"/>
<dbReference type="KEGG" id="rno:499839"/>
<dbReference type="UCSC" id="RGD:1564664">
    <property type="organism name" value="rat"/>
</dbReference>
<dbReference type="AGR" id="RGD:1564664"/>
<dbReference type="CTD" id="499839"/>
<dbReference type="RGD" id="1564664">
    <property type="gene designation" value="C3h11orf96"/>
</dbReference>
<dbReference type="GeneTree" id="ENSGT00390000016821"/>
<dbReference type="HOGENOM" id="CLU_1245012_0_0_1"/>
<dbReference type="InParanoid" id="A8IHN8"/>
<dbReference type="OMA" id="YASGXAV"/>
<dbReference type="OrthoDB" id="6156669at2759"/>
<dbReference type="PhylomeDB" id="A8IHN8"/>
<dbReference type="PRO" id="PR:A8IHN8"/>
<dbReference type="Proteomes" id="UP000002494">
    <property type="component" value="Chromosome 3"/>
</dbReference>
<dbReference type="Bgee" id="ENSRNOG00000055564">
    <property type="expression patterns" value="Expressed in stomach and 19 other cell types or tissues"/>
</dbReference>
<dbReference type="InterPro" id="IPR031521">
    <property type="entry name" value="DUF4695"/>
</dbReference>
<dbReference type="PANTHER" id="PTHR40250">
    <property type="entry name" value="CHROMOSOME 11 OPEN READING FRAME 96"/>
    <property type="match status" value="1"/>
</dbReference>
<dbReference type="PANTHER" id="PTHR40250:SF1">
    <property type="entry name" value="SI:CH1073-281M9.1"/>
    <property type="match status" value="1"/>
</dbReference>
<dbReference type="Pfam" id="PF15766">
    <property type="entry name" value="DUF4695"/>
    <property type="match status" value="1"/>
</dbReference>
<sequence length="242" mass="26097">MAFAVIRACSRVGRGGLYKRLGGLPRGTRRQRQRRQGASLSTTEQRSLAPRPPTGPPARYPSPAVPARASEARRHPAADLDPPPGEPQAVASRGTPEPRPPPESPGAQPPPGPAAADGAMAAAKPGELMGISSSYQAVMPHFVCLADEFPQPVRPAKLPKGKGRLRRPRQSRFKTQPVTFDEIQEVEEEGVSPMEEEKAKKSFLQSLECLRRSTQSLSLQREPLGSCKLRNSLDSSDSDSAL</sequence>